<proteinExistence type="inferred from homology"/>
<organism>
    <name type="scientific">Acidobacterium capsulatum (strain ATCC 51196 / DSM 11244 / BCRC 80197 / JCM 7670 / NBRC 15755 / NCIMB 13165 / 161)</name>
    <dbReference type="NCBI Taxonomy" id="240015"/>
    <lineage>
        <taxon>Bacteria</taxon>
        <taxon>Pseudomonadati</taxon>
        <taxon>Acidobacteriota</taxon>
        <taxon>Terriglobia</taxon>
        <taxon>Terriglobales</taxon>
        <taxon>Acidobacteriaceae</taxon>
        <taxon>Acidobacterium</taxon>
    </lineage>
</organism>
<dbReference type="EC" id="4.2.1.33" evidence="1"/>
<dbReference type="EMBL" id="CP001472">
    <property type="protein sequence ID" value="ACO34591.1"/>
    <property type="molecule type" value="Genomic_DNA"/>
</dbReference>
<dbReference type="RefSeq" id="WP_015898497.1">
    <property type="nucleotide sequence ID" value="NC_012483.1"/>
</dbReference>
<dbReference type="SMR" id="C1F6Z9"/>
<dbReference type="FunCoup" id="C1F6Z9">
    <property type="interactions" value="520"/>
</dbReference>
<dbReference type="STRING" id="240015.ACP_3468"/>
<dbReference type="KEGG" id="aca:ACP_3468"/>
<dbReference type="eggNOG" id="COG0066">
    <property type="taxonomic scope" value="Bacteria"/>
</dbReference>
<dbReference type="HOGENOM" id="CLU_081378_0_3_0"/>
<dbReference type="InParanoid" id="C1F6Z9"/>
<dbReference type="OrthoDB" id="9777465at2"/>
<dbReference type="UniPathway" id="UPA00048">
    <property type="reaction ID" value="UER00071"/>
</dbReference>
<dbReference type="Proteomes" id="UP000002207">
    <property type="component" value="Chromosome"/>
</dbReference>
<dbReference type="GO" id="GO:0009316">
    <property type="term" value="C:3-isopropylmalate dehydratase complex"/>
    <property type="evidence" value="ECO:0007669"/>
    <property type="project" value="InterPro"/>
</dbReference>
<dbReference type="GO" id="GO:0003861">
    <property type="term" value="F:3-isopropylmalate dehydratase activity"/>
    <property type="evidence" value="ECO:0007669"/>
    <property type="project" value="UniProtKB-UniRule"/>
</dbReference>
<dbReference type="GO" id="GO:0009098">
    <property type="term" value="P:L-leucine biosynthetic process"/>
    <property type="evidence" value="ECO:0007669"/>
    <property type="project" value="UniProtKB-UniRule"/>
</dbReference>
<dbReference type="CDD" id="cd01577">
    <property type="entry name" value="IPMI_Swivel"/>
    <property type="match status" value="1"/>
</dbReference>
<dbReference type="FunFam" id="3.20.19.10:FF:000003">
    <property type="entry name" value="3-isopropylmalate dehydratase small subunit"/>
    <property type="match status" value="1"/>
</dbReference>
<dbReference type="Gene3D" id="3.20.19.10">
    <property type="entry name" value="Aconitase, domain 4"/>
    <property type="match status" value="1"/>
</dbReference>
<dbReference type="HAMAP" id="MF_01031">
    <property type="entry name" value="LeuD_type1"/>
    <property type="match status" value="1"/>
</dbReference>
<dbReference type="InterPro" id="IPR004431">
    <property type="entry name" value="3-IsopropMal_deHydase_ssu"/>
</dbReference>
<dbReference type="InterPro" id="IPR015928">
    <property type="entry name" value="Aconitase/3IPM_dehydase_swvl"/>
</dbReference>
<dbReference type="InterPro" id="IPR000573">
    <property type="entry name" value="AconitaseA/IPMdHydase_ssu_swvl"/>
</dbReference>
<dbReference type="InterPro" id="IPR033940">
    <property type="entry name" value="IPMI_Swivel"/>
</dbReference>
<dbReference type="InterPro" id="IPR050075">
    <property type="entry name" value="LeuD"/>
</dbReference>
<dbReference type="NCBIfam" id="TIGR00171">
    <property type="entry name" value="leuD"/>
    <property type="match status" value="1"/>
</dbReference>
<dbReference type="NCBIfam" id="NF002458">
    <property type="entry name" value="PRK01641.1"/>
    <property type="match status" value="1"/>
</dbReference>
<dbReference type="PANTHER" id="PTHR43345:SF5">
    <property type="entry name" value="3-ISOPROPYLMALATE DEHYDRATASE SMALL SUBUNIT"/>
    <property type="match status" value="1"/>
</dbReference>
<dbReference type="PANTHER" id="PTHR43345">
    <property type="entry name" value="3-ISOPROPYLMALATE DEHYDRATASE SMALL SUBUNIT 2-RELATED-RELATED"/>
    <property type="match status" value="1"/>
</dbReference>
<dbReference type="Pfam" id="PF00694">
    <property type="entry name" value="Aconitase_C"/>
    <property type="match status" value="1"/>
</dbReference>
<dbReference type="SUPFAM" id="SSF52016">
    <property type="entry name" value="LeuD/IlvD-like"/>
    <property type="match status" value="1"/>
</dbReference>
<feature type="chain" id="PRO_1000149394" description="3-isopropylmalate dehydratase small subunit">
    <location>
        <begin position="1"/>
        <end position="206"/>
    </location>
</feature>
<protein>
    <recommendedName>
        <fullName evidence="1">3-isopropylmalate dehydratase small subunit</fullName>
        <ecNumber evidence="1">4.2.1.33</ecNumber>
    </recommendedName>
    <alternativeName>
        <fullName evidence="1">Alpha-IPM isomerase</fullName>
        <shortName evidence="1">IPMI</shortName>
    </alternativeName>
    <alternativeName>
        <fullName evidence="1">Isopropylmalate isomerase</fullName>
    </alternativeName>
</protein>
<comment type="function">
    <text evidence="1">Catalyzes the isomerization between 2-isopropylmalate and 3-isopropylmalate, via the formation of 2-isopropylmaleate.</text>
</comment>
<comment type="catalytic activity">
    <reaction evidence="1">
        <text>(2R,3S)-3-isopropylmalate = (2S)-2-isopropylmalate</text>
        <dbReference type="Rhea" id="RHEA:32287"/>
        <dbReference type="ChEBI" id="CHEBI:1178"/>
        <dbReference type="ChEBI" id="CHEBI:35121"/>
        <dbReference type="EC" id="4.2.1.33"/>
    </reaction>
</comment>
<comment type="pathway">
    <text evidence="1">Amino-acid biosynthesis; L-leucine biosynthesis; L-leucine from 3-methyl-2-oxobutanoate: step 2/4.</text>
</comment>
<comment type="subunit">
    <text evidence="1">Heterodimer of LeuC and LeuD.</text>
</comment>
<comment type="similarity">
    <text evidence="1">Belongs to the LeuD family. LeuD type 1 subfamily.</text>
</comment>
<sequence>MQPFRTLHSTVTPLDRVNVDTDQIIPKQFLKRIERTGYGEFLFFDWRQDPAFELNQPRYKGSQILVANKNFGCGSSREHAAWALGDFGFRCVISSSFADIFHSNAGKNGILLVKLSEGDVNTLLERAQKTQGYSLTVSLEEQTVKDGQGFSDSFEIDAFRRYCLLEGLDDIGLTMRYQDKLDAFEKEHDGKFWLAPRGGLAASRTS</sequence>
<name>LEUD_ACIC5</name>
<evidence type="ECO:0000255" key="1">
    <source>
        <dbReference type="HAMAP-Rule" id="MF_01031"/>
    </source>
</evidence>
<gene>
    <name evidence="1" type="primary">leuD</name>
    <name type="ordered locus">ACP_3468</name>
</gene>
<accession>C1F6Z9</accession>
<keyword id="KW-0028">Amino-acid biosynthesis</keyword>
<keyword id="KW-0100">Branched-chain amino acid biosynthesis</keyword>
<keyword id="KW-0432">Leucine biosynthesis</keyword>
<keyword id="KW-0456">Lyase</keyword>
<keyword id="KW-1185">Reference proteome</keyword>
<reference key="1">
    <citation type="journal article" date="2009" name="Appl. Environ. Microbiol.">
        <title>Three genomes from the phylum Acidobacteria provide insight into the lifestyles of these microorganisms in soils.</title>
        <authorList>
            <person name="Ward N.L."/>
            <person name="Challacombe J.F."/>
            <person name="Janssen P.H."/>
            <person name="Henrissat B."/>
            <person name="Coutinho P.M."/>
            <person name="Wu M."/>
            <person name="Xie G."/>
            <person name="Haft D.H."/>
            <person name="Sait M."/>
            <person name="Badger J."/>
            <person name="Barabote R.D."/>
            <person name="Bradley B."/>
            <person name="Brettin T.S."/>
            <person name="Brinkac L.M."/>
            <person name="Bruce D."/>
            <person name="Creasy T."/>
            <person name="Daugherty S.C."/>
            <person name="Davidsen T.M."/>
            <person name="DeBoy R.T."/>
            <person name="Detter J.C."/>
            <person name="Dodson R.J."/>
            <person name="Durkin A.S."/>
            <person name="Ganapathy A."/>
            <person name="Gwinn-Giglio M."/>
            <person name="Han C.S."/>
            <person name="Khouri H."/>
            <person name="Kiss H."/>
            <person name="Kothari S.P."/>
            <person name="Madupu R."/>
            <person name="Nelson K.E."/>
            <person name="Nelson W.C."/>
            <person name="Paulsen I."/>
            <person name="Penn K."/>
            <person name="Ren Q."/>
            <person name="Rosovitz M.J."/>
            <person name="Selengut J.D."/>
            <person name="Shrivastava S."/>
            <person name="Sullivan S.A."/>
            <person name="Tapia R."/>
            <person name="Thompson L.S."/>
            <person name="Watkins K.L."/>
            <person name="Yang Q."/>
            <person name="Yu C."/>
            <person name="Zafar N."/>
            <person name="Zhou L."/>
            <person name="Kuske C.R."/>
        </authorList>
    </citation>
    <scope>NUCLEOTIDE SEQUENCE [LARGE SCALE GENOMIC DNA]</scope>
    <source>
        <strain>ATCC 51196 / DSM 11244 / BCRC 80197 / JCM 7670 / NBRC 15755 / NCIMB 13165 / 161</strain>
    </source>
</reference>